<comment type="function">
    <text evidence="1">Responsible for the release of ribosomes from messenger RNA at the termination of protein biosynthesis. May increase the efficiency of translation by recycling ribosomes from one round of translation to another.</text>
</comment>
<comment type="subcellular location">
    <subcellularLocation>
        <location evidence="1">Cytoplasm</location>
    </subcellularLocation>
</comment>
<comment type="similarity">
    <text evidence="1">Belongs to the RRF family.</text>
</comment>
<feature type="chain" id="PRO_1000090711" description="Ribosome-recycling factor">
    <location>
        <begin position="1"/>
        <end position="184"/>
    </location>
</feature>
<accession>B2RZI6</accession>
<proteinExistence type="inferred from homology"/>
<name>RRF_BORHD</name>
<organism>
    <name type="scientific">Borrelia hermsii (strain HS1 / DAH)</name>
    <dbReference type="NCBI Taxonomy" id="314723"/>
    <lineage>
        <taxon>Bacteria</taxon>
        <taxon>Pseudomonadati</taxon>
        <taxon>Spirochaetota</taxon>
        <taxon>Spirochaetia</taxon>
        <taxon>Spirochaetales</taxon>
        <taxon>Borreliaceae</taxon>
        <taxon>Borrelia</taxon>
    </lineage>
</organism>
<reference key="1">
    <citation type="submission" date="2004-12" db="EMBL/GenBank/DDBJ databases">
        <title>The genome sequence of Borrelia hermsii and Borrelia turicatae: comparative analysis of two agents of endemic N. America relapsing fever.</title>
        <authorList>
            <person name="Porcella S.F."/>
            <person name="Raffel S.J."/>
            <person name="Schrumpf M.E."/>
            <person name="Montgomery B."/>
            <person name="Smith T."/>
            <person name="Schwan T.G."/>
        </authorList>
    </citation>
    <scope>NUCLEOTIDE SEQUENCE [LARGE SCALE GENOMIC DNA]</scope>
    <source>
        <strain>HS1 / DAH</strain>
    </source>
</reference>
<gene>
    <name evidence="1" type="primary">frr</name>
    <name type="ordered locus">BH0121</name>
</gene>
<evidence type="ECO:0000255" key="1">
    <source>
        <dbReference type="HAMAP-Rule" id="MF_00040"/>
    </source>
</evidence>
<dbReference type="EMBL" id="CP000048">
    <property type="protein sequence ID" value="AAX16642.1"/>
    <property type="molecule type" value="Genomic_DNA"/>
</dbReference>
<dbReference type="RefSeq" id="WP_012421899.1">
    <property type="nucleotide sequence ID" value="NZ_CP073136.1"/>
</dbReference>
<dbReference type="SMR" id="B2RZI6"/>
<dbReference type="GeneID" id="71842932"/>
<dbReference type="KEGG" id="bhr:BH0121"/>
<dbReference type="HOGENOM" id="CLU_073981_2_0_12"/>
<dbReference type="Proteomes" id="UP000008834">
    <property type="component" value="Chromosome"/>
</dbReference>
<dbReference type="GO" id="GO:0005737">
    <property type="term" value="C:cytoplasm"/>
    <property type="evidence" value="ECO:0007669"/>
    <property type="project" value="UniProtKB-SubCell"/>
</dbReference>
<dbReference type="GO" id="GO:0043023">
    <property type="term" value="F:ribosomal large subunit binding"/>
    <property type="evidence" value="ECO:0007669"/>
    <property type="project" value="TreeGrafter"/>
</dbReference>
<dbReference type="GO" id="GO:0006415">
    <property type="term" value="P:translational termination"/>
    <property type="evidence" value="ECO:0007669"/>
    <property type="project" value="UniProtKB-UniRule"/>
</dbReference>
<dbReference type="CDD" id="cd00520">
    <property type="entry name" value="RRF"/>
    <property type="match status" value="1"/>
</dbReference>
<dbReference type="FunFam" id="1.10.132.20:FF:000001">
    <property type="entry name" value="Ribosome-recycling factor"/>
    <property type="match status" value="1"/>
</dbReference>
<dbReference type="FunFam" id="3.30.1360.40:FF:000001">
    <property type="entry name" value="Ribosome-recycling factor"/>
    <property type="match status" value="1"/>
</dbReference>
<dbReference type="Gene3D" id="3.30.1360.40">
    <property type="match status" value="1"/>
</dbReference>
<dbReference type="Gene3D" id="1.10.132.20">
    <property type="entry name" value="Ribosome-recycling factor"/>
    <property type="match status" value="1"/>
</dbReference>
<dbReference type="HAMAP" id="MF_00040">
    <property type="entry name" value="RRF"/>
    <property type="match status" value="1"/>
</dbReference>
<dbReference type="InterPro" id="IPR002661">
    <property type="entry name" value="Ribosome_recyc_fac"/>
</dbReference>
<dbReference type="InterPro" id="IPR023584">
    <property type="entry name" value="Ribosome_recyc_fac_dom"/>
</dbReference>
<dbReference type="InterPro" id="IPR036191">
    <property type="entry name" value="RRF_sf"/>
</dbReference>
<dbReference type="NCBIfam" id="TIGR00496">
    <property type="entry name" value="frr"/>
    <property type="match status" value="1"/>
</dbReference>
<dbReference type="PANTHER" id="PTHR20982:SF3">
    <property type="entry name" value="MITOCHONDRIAL RIBOSOME RECYCLING FACTOR PSEUDO 1"/>
    <property type="match status" value="1"/>
</dbReference>
<dbReference type="PANTHER" id="PTHR20982">
    <property type="entry name" value="RIBOSOME RECYCLING FACTOR"/>
    <property type="match status" value="1"/>
</dbReference>
<dbReference type="Pfam" id="PF01765">
    <property type="entry name" value="RRF"/>
    <property type="match status" value="1"/>
</dbReference>
<dbReference type="SUPFAM" id="SSF55194">
    <property type="entry name" value="Ribosome recycling factor, RRF"/>
    <property type="match status" value="1"/>
</dbReference>
<protein>
    <recommendedName>
        <fullName evidence="1">Ribosome-recycling factor</fullName>
        <shortName evidence="1">RRF</shortName>
    </recommendedName>
    <alternativeName>
        <fullName evidence="1">Ribosome-releasing factor</fullName>
    </alternativeName>
</protein>
<sequence length="184" mass="21335">MEEYKALLDEKMDRVLLSLDSEYKSLRTGRISSALFDKVLVDYYGEKTPLTRVANISIPEARLIVIQPWDKSLLSKIEQAILSSDLSMNPSSDGSVLRIKVPVLTVERRKEIVKQAKKIAEEYKVAARNVRQELNNKAKKQEKDSQITEDDLRRILDDIQRDTNSYIKKIDEIFDLKTKEIMEF</sequence>
<keyword id="KW-0963">Cytoplasm</keyword>
<keyword id="KW-0648">Protein biosynthesis</keyword>